<reference key="1">
    <citation type="journal article" date="2004" name="PLoS Biol.">
        <title>Genomic insights into methanotrophy: the complete genome sequence of Methylococcus capsulatus (Bath).</title>
        <authorList>
            <person name="Ward N.L."/>
            <person name="Larsen O."/>
            <person name="Sakwa J."/>
            <person name="Bruseth L."/>
            <person name="Khouri H.M."/>
            <person name="Durkin A.S."/>
            <person name="Dimitrov G."/>
            <person name="Jiang L."/>
            <person name="Scanlan D."/>
            <person name="Kang K.H."/>
            <person name="Lewis M.R."/>
            <person name="Nelson K.E."/>
            <person name="Methe B.A."/>
            <person name="Wu M."/>
            <person name="Heidelberg J.F."/>
            <person name="Paulsen I.T."/>
            <person name="Fouts D.E."/>
            <person name="Ravel J."/>
            <person name="Tettelin H."/>
            <person name="Ren Q."/>
            <person name="Read T.D."/>
            <person name="DeBoy R.T."/>
            <person name="Seshadri R."/>
            <person name="Salzberg S.L."/>
            <person name="Jensen H.B."/>
            <person name="Birkeland N.K."/>
            <person name="Nelson W.C."/>
            <person name="Dodson R.J."/>
            <person name="Grindhaug S.H."/>
            <person name="Holt I.E."/>
            <person name="Eidhammer I."/>
            <person name="Jonasen I."/>
            <person name="Vanaken S."/>
            <person name="Utterback T.R."/>
            <person name="Feldblyum T.V."/>
            <person name="Fraser C.M."/>
            <person name="Lillehaug J.R."/>
            <person name="Eisen J.A."/>
        </authorList>
    </citation>
    <scope>NUCLEOTIDE SEQUENCE [LARGE SCALE GENOMIC DNA]</scope>
    <source>
        <strain>ATCC 33009 / NCIMB 11132 / Bath</strain>
    </source>
</reference>
<keyword id="KW-0963">Cytoplasm</keyword>
<keyword id="KW-0342">GTP-binding</keyword>
<keyword id="KW-0396">Initiation factor</keyword>
<keyword id="KW-0547">Nucleotide-binding</keyword>
<keyword id="KW-0648">Protein biosynthesis</keyword>
<keyword id="KW-1185">Reference proteome</keyword>
<proteinExistence type="inferred from homology"/>
<feature type="chain" id="PRO_0000228213" description="Translation initiation factor IF-2">
    <location>
        <begin position="1"/>
        <end position="868"/>
    </location>
</feature>
<feature type="domain" description="tr-type G">
    <location>
        <begin position="369"/>
        <end position="538"/>
    </location>
</feature>
<feature type="region of interest" description="Disordered" evidence="3">
    <location>
        <begin position="103"/>
        <end position="274"/>
    </location>
</feature>
<feature type="region of interest" description="G1" evidence="1">
    <location>
        <begin position="378"/>
        <end position="385"/>
    </location>
</feature>
<feature type="region of interest" description="G2" evidence="1">
    <location>
        <begin position="403"/>
        <end position="407"/>
    </location>
</feature>
<feature type="region of interest" description="G3" evidence="1">
    <location>
        <begin position="424"/>
        <end position="427"/>
    </location>
</feature>
<feature type="region of interest" description="G4" evidence="1">
    <location>
        <begin position="478"/>
        <end position="481"/>
    </location>
</feature>
<feature type="region of interest" description="G5" evidence="1">
    <location>
        <begin position="514"/>
        <end position="516"/>
    </location>
</feature>
<feature type="compositionally biased region" description="Basic and acidic residues" evidence="3">
    <location>
        <begin position="103"/>
        <end position="183"/>
    </location>
</feature>
<feature type="compositionally biased region" description="Pro residues" evidence="3">
    <location>
        <begin position="190"/>
        <end position="207"/>
    </location>
</feature>
<feature type="compositionally biased region" description="Basic and acidic residues" evidence="3">
    <location>
        <begin position="213"/>
        <end position="254"/>
    </location>
</feature>
<feature type="compositionally biased region" description="Basic residues" evidence="3">
    <location>
        <begin position="255"/>
        <end position="264"/>
    </location>
</feature>
<feature type="binding site" evidence="2">
    <location>
        <begin position="378"/>
        <end position="385"/>
    </location>
    <ligand>
        <name>GTP</name>
        <dbReference type="ChEBI" id="CHEBI:37565"/>
    </ligand>
</feature>
<feature type="binding site" evidence="2">
    <location>
        <begin position="424"/>
        <end position="428"/>
    </location>
    <ligand>
        <name>GTP</name>
        <dbReference type="ChEBI" id="CHEBI:37565"/>
    </ligand>
</feature>
<feature type="binding site" evidence="2">
    <location>
        <begin position="478"/>
        <end position="481"/>
    </location>
    <ligand>
        <name>GTP</name>
        <dbReference type="ChEBI" id="CHEBI:37565"/>
    </ligand>
</feature>
<evidence type="ECO:0000250" key="1"/>
<evidence type="ECO:0000255" key="2">
    <source>
        <dbReference type="HAMAP-Rule" id="MF_00100"/>
    </source>
</evidence>
<evidence type="ECO:0000256" key="3">
    <source>
        <dbReference type="SAM" id="MobiDB-lite"/>
    </source>
</evidence>
<accession>Q609C0</accession>
<organism>
    <name type="scientific">Methylococcus capsulatus (strain ATCC 33009 / NCIMB 11132 / Bath)</name>
    <dbReference type="NCBI Taxonomy" id="243233"/>
    <lineage>
        <taxon>Bacteria</taxon>
        <taxon>Pseudomonadati</taxon>
        <taxon>Pseudomonadota</taxon>
        <taxon>Gammaproteobacteria</taxon>
        <taxon>Methylococcales</taxon>
        <taxon>Methylococcaceae</taxon>
        <taxon>Methylococcus</taxon>
    </lineage>
</organism>
<name>IF2_METCA</name>
<sequence length="868" mass="94854">MSDVTVRQLAGIVGIPLDRLLHQLGDAGLQISDADDVLSDAEKMKLLNHLRQSHGKVQESVTEPKRVTLQRRSVTELKQGTVPGKGAKTISVEVRKKRTYVKRSELPETSDRLSEAEQARRALEEQQQRELAEQEARRQQEEMLREQAAEEERRRQEEAARTAEERRRRDEEERQAAAERETVAAKPAPVAAPPIPRPAPEPRPPARPSAGKPKAEAPRAHPAERETEARGDKRSAGLSRKDEYRELQGDDFRKGGGKRKKPKTGRPMLMPEQKHGFEKPTAPIVYEVAVPESITVSDLAQRMSVKGVEVIKALMKMGVMATINQVLDQETAILVVEEMGHKAIAQKEDDLEAEIMANLAAEAEAPQLPRPPVVTIMGHVDHGKTSLLDYIRKSRVAAGEAGGITQHIGAYQVKTDHGSITFLDTPGHAAFTAMRARGAKVTDIVVLVVAADDGVMPQTREAVEHSRAAGVPLVVAMNKMDKADADPDRVKQELVGLNVVPEEWGGDVQFVPVSAKTGAGIDTLLDAILVQAEVLELKAPVAIPAAGVVLESKLEKGRGPVADILIQRGTLKKGDFLLCGKEIGRVRAMFNENGKPLKEAGPSAPIEVLGLSGAPEAGDEFIVVADERKAREIALHREEKLRSTKLAAQQAAKLEDVFSLMGSEETIDLNLVIKADVQGSLEALRSALTELSTDKVKVRVIGGGVGGISETDANLALASNAILIGFNVRADGSARKLIEERGIDLHYYSVIYNAIDEVKKSINGMLEPEFKEQIIGIAQVREVFRSSKFGTVAGCLVVEGHVRRNLPIRVLRDNVVIFEGQLESLRRFKDDVNEVKSGMECGIAVRNYNDVREGDQIEVFEKVQVAPH</sequence>
<dbReference type="EMBL" id="AE017282">
    <property type="protein sequence ID" value="AAU92656.1"/>
    <property type="molecule type" value="Genomic_DNA"/>
</dbReference>
<dbReference type="RefSeq" id="WP_010960596.1">
    <property type="nucleotide sequence ID" value="NC_002977.6"/>
</dbReference>
<dbReference type="SMR" id="Q609C0"/>
<dbReference type="STRING" id="243233.MCA1315"/>
<dbReference type="GeneID" id="88223598"/>
<dbReference type="KEGG" id="mca:MCA1315"/>
<dbReference type="eggNOG" id="COG0532">
    <property type="taxonomic scope" value="Bacteria"/>
</dbReference>
<dbReference type="HOGENOM" id="CLU_006301_6_3_6"/>
<dbReference type="Proteomes" id="UP000006821">
    <property type="component" value="Chromosome"/>
</dbReference>
<dbReference type="GO" id="GO:0005829">
    <property type="term" value="C:cytosol"/>
    <property type="evidence" value="ECO:0007669"/>
    <property type="project" value="TreeGrafter"/>
</dbReference>
<dbReference type="GO" id="GO:0005525">
    <property type="term" value="F:GTP binding"/>
    <property type="evidence" value="ECO:0007669"/>
    <property type="project" value="UniProtKB-KW"/>
</dbReference>
<dbReference type="GO" id="GO:0003924">
    <property type="term" value="F:GTPase activity"/>
    <property type="evidence" value="ECO:0007669"/>
    <property type="project" value="UniProtKB-UniRule"/>
</dbReference>
<dbReference type="GO" id="GO:0097216">
    <property type="term" value="F:guanosine tetraphosphate binding"/>
    <property type="evidence" value="ECO:0007669"/>
    <property type="project" value="UniProtKB-ARBA"/>
</dbReference>
<dbReference type="GO" id="GO:0003743">
    <property type="term" value="F:translation initiation factor activity"/>
    <property type="evidence" value="ECO:0007669"/>
    <property type="project" value="UniProtKB-UniRule"/>
</dbReference>
<dbReference type="CDD" id="cd01887">
    <property type="entry name" value="IF2_eIF5B"/>
    <property type="match status" value="1"/>
</dbReference>
<dbReference type="CDD" id="cd03702">
    <property type="entry name" value="IF2_mtIF2_II"/>
    <property type="match status" value="1"/>
</dbReference>
<dbReference type="CDD" id="cd03692">
    <property type="entry name" value="mtIF2_IVc"/>
    <property type="match status" value="1"/>
</dbReference>
<dbReference type="FunFam" id="2.40.30.10:FF:000007">
    <property type="entry name" value="Translation initiation factor IF-2"/>
    <property type="match status" value="1"/>
</dbReference>
<dbReference type="FunFam" id="2.40.30.10:FF:000008">
    <property type="entry name" value="Translation initiation factor IF-2"/>
    <property type="match status" value="1"/>
</dbReference>
<dbReference type="FunFam" id="3.40.50.10050:FF:000001">
    <property type="entry name" value="Translation initiation factor IF-2"/>
    <property type="match status" value="1"/>
</dbReference>
<dbReference type="FunFam" id="3.40.50.300:FF:000019">
    <property type="entry name" value="Translation initiation factor IF-2"/>
    <property type="match status" value="1"/>
</dbReference>
<dbReference type="Gene3D" id="3.40.50.300">
    <property type="entry name" value="P-loop containing nucleotide triphosphate hydrolases"/>
    <property type="match status" value="1"/>
</dbReference>
<dbReference type="Gene3D" id="3.30.56.50">
    <property type="entry name" value="Putative DNA-binding domain, N-terminal subdomain of bacterial translation initiation factor IF2"/>
    <property type="match status" value="1"/>
</dbReference>
<dbReference type="Gene3D" id="2.40.30.10">
    <property type="entry name" value="Translation factors"/>
    <property type="match status" value="2"/>
</dbReference>
<dbReference type="Gene3D" id="3.40.50.10050">
    <property type="entry name" value="Translation initiation factor IF- 2, domain 3"/>
    <property type="match status" value="1"/>
</dbReference>
<dbReference type="HAMAP" id="MF_00100_B">
    <property type="entry name" value="IF_2_B"/>
    <property type="match status" value="1"/>
</dbReference>
<dbReference type="InterPro" id="IPR009061">
    <property type="entry name" value="DNA-bd_dom_put_sf"/>
</dbReference>
<dbReference type="InterPro" id="IPR053905">
    <property type="entry name" value="EF-G-like_DII"/>
</dbReference>
<dbReference type="InterPro" id="IPR004161">
    <property type="entry name" value="EFTu-like_2"/>
</dbReference>
<dbReference type="InterPro" id="IPR013575">
    <property type="entry name" value="IF2_assoc_dom_bac"/>
</dbReference>
<dbReference type="InterPro" id="IPR044145">
    <property type="entry name" value="IF2_II"/>
</dbReference>
<dbReference type="InterPro" id="IPR006847">
    <property type="entry name" value="IF2_N"/>
</dbReference>
<dbReference type="InterPro" id="IPR027417">
    <property type="entry name" value="P-loop_NTPase"/>
</dbReference>
<dbReference type="InterPro" id="IPR005225">
    <property type="entry name" value="Small_GTP-bd"/>
</dbReference>
<dbReference type="InterPro" id="IPR000795">
    <property type="entry name" value="T_Tr_GTP-bd_dom"/>
</dbReference>
<dbReference type="InterPro" id="IPR000178">
    <property type="entry name" value="TF_IF2_bacterial-like"/>
</dbReference>
<dbReference type="InterPro" id="IPR015760">
    <property type="entry name" value="TIF_IF2"/>
</dbReference>
<dbReference type="InterPro" id="IPR023115">
    <property type="entry name" value="TIF_IF2_dom3"/>
</dbReference>
<dbReference type="InterPro" id="IPR036925">
    <property type="entry name" value="TIF_IF2_dom3_sf"/>
</dbReference>
<dbReference type="InterPro" id="IPR009000">
    <property type="entry name" value="Transl_B-barrel_sf"/>
</dbReference>
<dbReference type="NCBIfam" id="TIGR00487">
    <property type="entry name" value="IF-2"/>
    <property type="match status" value="1"/>
</dbReference>
<dbReference type="NCBIfam" id="TIGR00231">
    <property type="entry name" value="small_GTP"/>
    <property type="match status" value="1"/>
</dbReference>
<dbReference type="PANTHER" id="PTHR43381:SF5">
    <property type="entry name" value="TR-TYPE G DOMAIN-CONTAINING PROTEIN"/>
    <property type="match status" value="1"/>
</dbReference>
<dbReference type="PANTHER" id="PTHR43381">
    <property type="entry name" value="TRANSLATION INITIATION FACTOR IF-2-RELATED"/>
    <property type="match status" value="1"/>
</dbReference>
<dbReference type="Pfam" id="PF22042">
    <property type="entry name" value="EF-G_D2"/>
    <property type="match status" value="1"/>
</dbReference>
<dbReference type="Pfam" id="PF00009">
    <property type="entry name" value="GTP_EFTU"/>
    <property type="match status" value="1"/>
</dbReference>
<dbReference type="Pfam" id="PF03144">
    <property type="entry name" value="GTP_EFTU_D2"/>
    <property type="match status" value="1"/>
</dbReference>
<dbReference type="Pfam" id="PF11987">
    <property type="entry name" value="IF-2"/>
    <property type="match status" value="1"/>
</dbReference>
<dbReference type="Pfam" id="PF08364">
    <property type="entry name" value="IF2_assoc"/>
    <property type="match status" value="1"/>
</dbReference>
<dbReference type="Pfam" id="PF04760">
    <property type="entry name" value="IF2_N"/>
    <property type="match status" value="2"/>
</dbReference>
<dbReference type="SUPFAM" id="SSF52156">
    <property type="entry name" value="Initiation factor IF2/eIF5b, domain 3"/>
    <property type="match status" value="1"/>
</dbReference>
<dbReference type="SUPFAM" id="SSF52540">
    <property type="entry name" value="P-loop containing nucleoside triphosphate hydrolases"/>
    <property type="match status" value="1"/>
</dbReference>
<dbReference type="SUPFAM" id="SSF46955">
    <property type="entry name" value="Putative DNA-binding domain"/>
    <property type="match status" value="1"/>
</dbReference>
<dbReference type="SUPFAM" id="SSF50447">
    <property type="entry name" value="Translation proteins"/>
    <property type="match status" value="2"/>
</dbReference>
<dbReference type="PROSITE" id="PS51722">
    <property type="entry name" value="G_TR_2"/>
    <property type="match status" value="1"/>
</dbReference>
<dbReference type="PROSITE" id="PS01176">
    <property type="entry name" value="IF2"/>
    <property type="match status" value="1"/>
</dbReference>
<gene>
    <name evidence="2" type="primary">infB</name>
    <name type="ordered locus">MCA1315</name>
</gene>
<protein>
    <recommendedName>
        <fullName evidence="2">Translation initiation factor IF-2</fullName>
    </recommendedName>
</protein>
<comment type="function">
    <text evidence="2">One of the essential components for the initiation of protein synthesis. Protects formylmethionyl-tRNA from spontaneous hydrolysis and promotes its binding to the 30S ribosomal subunits. Also involved in the hydrolysis of GTP during the formation of the 70S ribosomal complex.</text>
</comment>
<comment type="subcellular location">
    <subcellularLocation>
        <location evidence="2">Cytoplasm</location>
    </subcellularLocation>
</comment>
<comment type="similarity">
    <text evidence="2">Belongs to the TRAFAC class translation factor GTPase superfamily. Classic translation factor GTPase family. IF-2 subfamily.</text>
</comment>